<dbReference type="EMBL" id="AY358180">
    <property type="protein sequence ID" value="AAQ88547.1"/>
    <property type="molecule type" value="mRNA"/>
</dbReference>
<dbReference type="EMBL" id="AK027677">
    <property type="protein sequence ID" value="BAB55288.1"/>
    <property type="molecule type" value="mRNA"/>
</dbReference>
<dbReference type="EMBL" id="AL162426">
    <property type="status" value="NOT_ANNOTATED_CDS"/>
    <property type="molecule type" value="Genomic_DNA"/>
</dbReference>
<dbReference type="EMBL" id="BC100907">
    <property type="protein sequence ID" value="AAI00908.2"/>
    <property type="status" value="ALT_SEQ"/>
    <property type="molecule type" value="mRNA"/>
</dbReference>
<dbReference type="EMBL" id="BC100908">
    <property type="protein sequence ID" value="AAI00909.2"/>
    <property type="status" value="ALT_SEQ"/>
    <property type="molecule type" value="mRNA"/>
</dbReference>
<dbReference type="EMBL" id="BC100909">
    <property type="protein sequence ID" value="AAI00910.2"/>
    <property type="status" value="ALT_SEQ"/>
    <property type="molecule type" value="mRNA"/>
</dbReference>
<dbReference type="EMBL" id="BC100910">
    <property type="protein sequence ID" value="AAI00911.2"/>
    <property type="status" value="ALT_SEQ"/>
    <property type="molecule type" value="mRNA"/>
</dbReference>
<dbReference type="EMBL" id="BC080527">
    <property type="protein sequence ID" value="AAH80527.2"/>
    <property type="status" value="ALT_SEQ"/>
    <property type="molecule type" value="mRNA"/>
</dbReference>
<dbReference type="CCDS" id="CCDS43879.1">
    <molecule id="Q5JU69-1"/>
</dbReference>
<dbReference type="CCDS" id="CCDS48025.1">
    <molecule id="Q5JU69-5"/>
</dbReference>
<dbReference type="CCDS" id="CCDS6876.1">
    <molecule id="Q5JU69-2"/>
</dbReference>
<dbReference type="RefSeq" id="NP_001078816.2">
    <molecule id="Q5JU69-1"/>
    <property type="nucleotide sequence ID" value="NM_001085347.3"/>
</dbReference>
<dbReference type="RefSeq" id="NP_001127902.1">
    <property type="nucleotide sequence ID" value="NM_001134430.2"/>
</dbReference>
<dbReference type="RefSeq" id="NP_001127903.1">
    <molecule id="Q5JU69-5"/>
    <property type="nucleotide sequence ID" value="NM_001134431.3"/>
</dbReference>
<dbReference type="RefSeq" id="NP_001238947.1">
    <property type="nucleotide sequence ID" value="NM_001252018.1"/>
</dbReference>
<dbReference type="RefSeq" id="NP_001238950.1">
    <property type="nucleotide sequence ID" value="NM_001252021.1"/>
</dbReference>
<dbReference type="RefSeq" id="NP_001238952.1">
    <property type="nucleotide sequence ID" value="NM_001252023.1"/>
</dbReference>
<dbReference type="RefSeq" id="NP_569726.2">
    <molecule id="Q5JU69-2"/>
    <property type="nucleotide sequence ID" value="NM_130459.4"/>
</dbReference>
<dbReference type="SMR" id="Q5JU69"/>
<dbReference type="BioGRID" id="118167">
    <property type="interactions" value="35"/>
</dbReference>
<dbReference type="DIP" id="DIP-59332N"/>
<dbReference type="FunCoup" id="Q5JU69">
    <property type="interactions" value="530"/>
</dbReference>
<dbReference type="IntAct" id="Q5JU69">
    <property type="interactions" value="18"/>
</dbReference>
<dbReference type="STRING" id="9606.ENSP00000362381"/>
<dbReference type="GlyConnect" id="1825">
    <property type="glycosylation" value="2 N-Linked glycans (1 site)"/>
</dbReference>
<dbReference type="GlyCosmos" id="Q5JU69">
    <property type="glycosylation" value="1 site, 2 glycans"/>
</dbReference>
<dbReference type="GlyGen" id="Q5JU69">
    <property type="glycosylation" value="1 site, 5 N-linked glycans (1 site)"/>
</dbReference>
<dbReference type="iPTMnet" id="Q5JU69"/>
<dbReference type="PhosphoSitePlus" id="Q5JU69"/>
<dbReference type="SwissPalm" id="Q5JU69"/>
<dbReference type="BioMuta" id="TOR2A"/>
<dbReference type="DMDM" id="74742272"/>
<dbReference type="jPOST" id="Q5JU69"/>
<dbReference type="MassIVE" id="Q5JU69"/>
<dbReference type="PaxDb" id="9606-ENSP00000362381"/>
<dbReference type="ProteomicsDB" id="63257">
    <molecule id="Q5JU69-1"/>
</dbReference>
<dbReference type="ProteomicsDB" id="63258">
    <molecule id="Q5JU69-2"/>
</dbReference>
<dbReference type="Pumba" id="Q5JU69"/>
<dbReference type="Antibodypedia" id="30786">
    <property type="antibodies" value="135 antibodies from 22 providers"/>
</dbReference>
<dbReference type="DNASU" id="27433"/>
<dbReference type="Ensembl" id="ENST00000373281.8">
    <molecule id="Q5JU69-2"/>
    <property type="protein sequence ID" value="ENSP00000362378.5"/>
    <property type="gene ID" value="ENSG00000160404.18"/>
</dbReference>
<dbReference type="Ensembl" id="ENST00000373284.10">
    <molecule id="Q5JU69-1"/>
    <property type="protein sequence ID" value="ENSP00000362381.5"/>
    <property type="gene ID" value="ENSG00000160404.18"/>
</dbReference>
<dbReference type="Ensembl" id="ENST00000463256.5">
    <molecule id="Q5JU69-5"/>
    <property type="protein sequence ID" value="ENSP00000485648.1"/>
    <property type="gene ID" value="ENSG00000160404.18"/>
</dbReference>
<dbReference type="Ensembl" id="ENST00000463577.2">
    <molecule id="Q5JU69-5"/>
    <property type="protein sequence ID" value="ENSP00000485268.1"/>
    <property type="gene ID" value="ENSG00000160404.18"/>
</dbReference>
<dbReference type="Ensembl" id="ENST00000493439.1">
    <molecule id="Q5JU69-5"/>
    <property type="protein sequence ID" value="ENSP00000485360.1"/>
    <property type="gene ID" value="ENSG00000160404.18"/>
</dbReference>
<dbReference type="Ensembl" id="ENST00000496460.5">
    <molecule id="Q5JU69-5"/>
    <property type="protein sequence ID" value="ENSP00000485544.1"/>
    <property type="gene ID" value="ENSG00000160404.18"/>
</dbReference>
<dbReference type="GeneID" id="27433"/>
<dbReference type="KEGG" id="hsa:27433"/>
<dbReference type="MANE-Select" id="ENST00000373284.10">
    <property type="protein sequence ID" value="ENSP00000362381.5"/>
    <property type="RefSeq nucleotide sequence ID" value="NM_001085347.3"/>
    <property type="RefSeq protein sequence ID" value="NP_001078816.2"/>
</dbReference>
<dbReference type="UCSC" id="uc004brs.5">
    <molecule id="Q5JU69-1"/>
    <property type="organism name" value="human"/>
</dbReference>
<dbReference type="AGR" id="HGNC:11996"/>
<dbReference type="CTD" id="27433"/>
<dbReference type="DisGeNET" id="27433"/>
<dbReference type="GeneCards" id="TOR2A"/>
<dbReference type="HGNC" id="HGNC:11996">
    <property type="gene designation" value="TOR2A"/>
</dbReference>
<dbReference type="HPA" id="ENSG00000160404">
    <property type="expression patterns" value="Low tissue specificity"/>
</dbReference>
<dbReference type="MIM" id="608052">
    <property type="type" value="gene"/>
</dbReference>
<dbReference type="neXtProt" id="NX_Q5JU69"/>
<dbReference type="OpenTargets" id="ENSG00000160404"/>
<dbReference type="PharmGKB" id="PA36677"/>
<dbReference type="VEuPathDB" id="HostDB:ENSG00000160404"/>
<dbReference type="eggNOG" id="KOG2170">
    <property type="taxonomic scope" value="Eukaryota"/>
</dbReference>
<dbReference type="GeneTree" id="ENSGT00950000182888"/>
<dbReference type="HOGENOM" id="CLU_053537_0_0_1"/>
<dbReference type="InParanoid" id="Q5JU69"/>
<dbReference type="OMA" id="CECDFKP"/>
<dbReference type="OrthoDB" id="19623at2759"/>
<dbReference type="PAN-GO" id="Q5JU69">
    <property type="GO annotations" value="2 GO annotations based on evolutionary models"/>
</dbReference>
<dbReference type="PhylomeDB" id="Q5JU69"/>
<dbReference type="TreeFam" id="TF314941"/>
<dbReference type="PathwayCommons" id="Q5JU69"/>
<dbReference type="SignaLink" id="Q5JU69"/>
<dbReference type="BioGRID-ORCS" id="27433">
    <property type="hits" value="168 hits in 1166 CRISPR screens"/>
</dbReference>
<dbReference type="ChiTaRS" id="TOR2A">
    <property type="organism name" value="human"/>
</dbReference>
<dbReference type="GeneWiki" id="TOR2A"/>
<dbReference type="GenomeRNAi" id="27433"/>
<dbReference type="Pharos" id="Q5JU69">
    <property type="development level" value="Tbio"/>
</dbReference>
<dbReference type="Proteomes" id="UP000005640">
    <property type="component" value="Chromosome 9"/>
</dbReference>
<dbReference type="RNAct" id="Q5JU69">
    <property type="molecule type" value="protein"/>
</dbReference>
<dbReference type="Bgee" id="ENSG00000160404">
    <property type="expression patterns" value="Expressed in oocyte and 110 other cell types or tissues"/>
</dbReference>
<dbReference type="ExpressionAtlas" id="Q5JU69">
    <property type="expression patterns" value="baseline and differential"/>
</dbReference>
<dbReference type="GO" id="GO:0005788">
    <property type="term" value="C:endoplasmic reticulum lumen"/>
    <property type="evidence" value="ECO:0000314"/>
    <property type="project" value="MGI"/>
</dbReference>
<dbReference type="GO" id="GO:0005635">
    <property type="term" value="C:nuclear envelope"/>
    <property type="evidence" value="ECO:0000318"/>
    <property type="project" value="GO_Central"/>
</dbReference>
<dbReference type="GO" id="GO:0005524">
    <property type="term" value="F:ATP binding"/>
    <property type="evidence" value="ECO:0007669"/>
    <property type="project" value="UniProtKB-KW"/>
</dbReference>
<dbReference type="GO" id="GO:0016887">
    <property type="term" value="F:ATP hydrolysis activity"/>
    <property type="evidence" value="ECO:0007669"/>
    <property type="project" value="InterPro"/>
</dbReference>
<dbReference type="GO" id="GO:0042802">
    <property type="term" value="F:identical protein binding"/>
    <property type="evidence" value="ECO:0000353"/>
    <property type="project" value="MGI"/>
</dbReference>
<dbReference type="GO" id="GO:0051085">
    <property type="term" value="P:chaperone cofactor-dependent protein refolding"/>
    <property type="evidence" value="ECO:0007669"/>
    <property type="project" value="InterPro"/>
</dbReference>
<dbReference type="FunFam" id="3.40.50.300:FF:001014">
    <property type="entry name" value="Torsin"/>
    <property type="match status" value="1"/>
</dbReference>
<dbReference type="Gene3D" id="3.40.50.300">
    <property type="entry name" value="P-loop containing nucleotide triphosphate hydrolases"/>
    <property type="match status" value="1"/>
</dbReference>
<dbReference type="InterPro" id="IPR003593">
    <property type="entry name" value="AAA+_ATPase"/>
</dbReference>
<dbReference type="InterPro" id="IPR001270">
    <property type="entry name" value="ClpA/B"/>
</dbReference>
<dbReference type="InterPro" id="IPR027417">
    <property type="entry name" value="P-loop_NTPase"/>
</dbReference>
<dbReference type="InterPro" id="IPR049337">
    <property type="entry name" value="TOR1A_C"/>
</dbReference>
<dbReference type="InterPro" id="IPR010448">
    <property type="entry name" value="Torsin"/>
</dbReference>
<dbReference type="InterPro" id="IPR017378">
    <property type="entry name" value="Torsin_1/2"/>
</dbReference>
<dbReference type="PANTHER" id="PTHR10760">
    <property type="entry name" value="TORSIN"/>
    <property type="match status" value="1"/>
</dbReference>
<dbReference type="PANTHER" id="PTHR10760:SF4">
    <property type="entry name" value="TORSIN-2A"/>
    <property type="match status" value="1"/>
</dbReference>
<dbReference type="Pfam" id="PF21376">
    <property type="entry name" value="TOR1A_C"/>
    <property type="match status" value="1"/>
</dbReference>
<dbReference type="Pfam" id="PF06309">
    <property type="entry name" value="Torsin"/>
    <property type="match status" value="1"/>
</dbReference>
<dbReference type="PIRSF" id="PIRSF038079">
    <property type="entry name" value="Torsin_2A"/>
    <property type="match status" value="1"/>
</dbReference>
<dbReference type="PRINTS" id="PR00300">
    <property type="entry name" value="CLPPROTEASEA"/>
</dbReference>
<dbReference type="SMART" id="SM00382">
    <property type="entry name" value="AAA"/>
    <property type="match status" value="1"/>
</dbReference>
<dbReference type="SUPFAM" id="SSF52540">
    <property type="entry name" value="P-loop containing nucleoside triphosphate hydrolases"/>
    <property type="match status" value="1"/>
</dbReference>
<proteinExistence type="evidence at protein level"/>
<comment type="subunit">
    <text evidence="1">Homohexamer. Interacts with TOR1AIP1 (By similarity).</text>
</comment>
<comment type="subcellular location">
    <subcellularLocation>
        <location evidence="1">Endoplasmic reticulum lumen</location>
    </subcellularLocation>
</comment>
<comment type="alternative products">
    <event type="alternative splicing"/>
    <isoform>
        <id>Q5JU69-1</id>
        <name>1</name>
        <sequence type="displayed"/>
    </isoform>
    <isoform>
        <id>Q5JU69-2</id>
        <name>2</name>
        <sequence type="described" ref="VSP_017703 VSP_017704"/>
    </isoform>
    <isoform>
        <id>Q5JU69-5</id>
        <name>3</name>
        <sequence type="described" ref="VSP_035631 VSP_035632"/>
    </isoform>
    <isoform>
        <id>Q8N2E6-1</id>
        <name>4</name>
        <sequence type="external"/>
    </isoform>
</comment>
<comment type="tissue specificity">
    <text evidence="3">Isoform 1 is expressed ubiquitously, except in cardiac and endothelial tissues.</text>
</comment>
<comment type="similarity">
    <text evidence="7">Belongs to the ClpA/ClpB family. Torsin subfamily.</text>
</comment>
<comment type="sequence caution" evidence="7">
    <conflict type="erroneous translation">
        <sequence resource="EMBL-CDS" id="AAH80527"/>
    </conflict>
    <text>Wrong choice of frame.</text>
</comment>
<comment type="sequence caution" evidence="7">
    <conflict type="miscellaneous discrepancy">
        <sequence resource="EMBL-CDS" id="AAI00908"/>
    </conflict>
    <text>Probable cloning artifact.</text>
</comment>
<comment type="sequence caution" evidence="7">
    <conflict type="miscellaneous discrepancy">
        <sequence resource="EMBL-CDS" id="AAI00909"/>
    </conflict>
    <text>Probable cloning artifact.</text>
</comment>
<comment type="sequence caution" evidence="7">
    <conflict type="miscellaneous discrepancy">
        <sequence resource="EMBL-CDS" id="AAI00910"/>
    </conflict>
    <text>Probable cloning artifact.</text>
</comment>
<comment type="sequence caution" evidence="7">
    <conflict type="miscellaneous discrepancy">
        <sequence resource="EMBL-CDS" id="AAI00911"/>
    </conflict>
    <text>Probable cloning artifact.</text>
</comment>
<sequence>MAAATRGCRPWGSLLGLLGLVSAAAAAWDLASLRCTLGAFCECDFRPDLPGLECDLAQHLAGQHLAKALVVKALKAFVRDPAPTKPLVLSLHGWTGTGKSYVSSLLAHYLFQGGLRSPRVHHFSPVLHFPHPSHIERYKKDLKSWVQGNLTACGRSLFLFDEMDKMPPGLMEVLRPFLGSSWVVYGTNYRKAIFIFISNTGGKQINQVALEAWRSRRDREEILLQELEPVISRAVLDNPHHGFSNSGIMEERLLDAVVPFLPLQRHHVRHCVLNELAQLGLEPRDEVVQAVLDSTTFFPEDEQLFSSNGCKTVASRIAFFL</sequence>
<feature type="signal peptide" evidence="2">
    <location>
        <begin position="1"/>
        <end position="26"/>
    </location>
</feature>
<feature type="chain" id="PRO_0000228829" description="Torsin-2A">
    <location>
        <begin position="27"/>
        <end position="321"/>
    </location>
</feature>
<feature type="binding site" evidence="2">
    <location>
        <begin position="93"/>
        <end position="100"/>
    </location>
    <ligand>
        <name>ATP</name>
        <dbReference type="ChEBI" id="CHEBI:30616"/>
    </ligand>
</feature>
<feature type="glycosylation site" description="N-linked (GlcNAc...) asparagine" evidence="2">
    <location>
        <position position="149"/>
    </location>
</feature>
<feature type="splice variant" id="VSP_035631" description="In isoform 3." evidence="6">
    <original>GLECDLAQHLAGQHLAKALVVK</original>
    <variation>EGSEELGPREPHCLWPLPLPLR</variation>
    <location>
        <begin position="51"/>
        <end position="72"/>
    </location>
</feature>
<feature type="splice variant" id="VSP_035632" description="In isoform 3." evidence="6">
    <location>
        <begin position="73"/>
        <end position="321"/>
    </location>
</feature>
<feature type="splice variant" id="VSP_017703" description="In isoform 2." evidence="5">
    <original>SNTGGKQINQVALEAWRSRRDREEILLQELEPVISRAVLDNPHHGFSNSGIMEERL</original>
    <variation>RWGPALQWAQWGGHFSEVQLYSLSLCSQQNPVPHGLSWAFPVPSATLRDDIVIPPG</variation>
    <location>
        <begin position="198"/>
        <end position="253"/>
    </location>
</feature>
<feature type="splice variant" id="VSP_017704" description="In isoform 2." evidence="5">
    <location>
        <begin position="254"/>
        <end position="321"/>
    </location>
</feature>
<feature type="sequence variant" id="VAR_055661" description="In dbSNP:rs538066." evidence="4">
    <original>K</original>
    <variation>E</variation>
    <location>
        <position position="203"/>
    </location>
</feature>
<feature type="sequence conflict" description="In Ref. 2; BAB55288." evidence="7" ref="2">
    <original>W</original>
    <variation>C</variation>
    <location sequence="Q5JU69-2">
        <position position="208"/>
    </location>
</feature>
<protein>
    <recommendedName>
        <fullName>Torsin-2A</fullName>
    </recommendedName>
    <alternativeName>
        <fullName>Torsin family 2 member A</fullName>
    </alternativeName>
    <alternativeName>
        <fullName>Torsin-related protein 1</fullName>
    </alternativeName>
</protein>
<accession>Q5JU69</accession>
<accession>A4FU12</accession>
<accession>A4FU13</accession>
<accession>Q3ZCN9</accession>
<accession>Q3ZCP0</accession>
<accession>Q5JU68</accession>
<accession>Q66K87</accession>
<accession>Q6UXW6</accession>
<accession>Q8NAN5</accession>
<accession>Q96SL7</accession>
<evidence type="ECO:0000250" key="1"/>
<evidence type="ECO:0000255" key="2"/>
<evidence type="ECO:0000269" key="3">
    <source>
    </source>
</evidence>
<evidence type="ECO:0000269" key="4">
    <source>
    </source>
</evidence>
<evidence type="ECO:0000303" key="5">
    <source>
    </source>
</evidence>
<evidence type="ECO:0000303" key="6">
    <source>
    </source>
</evidence>
<evidence type="ECO:0000305" key="7"/>
<reference key="1">
    <citation type="journal article" date="2003" name="Genome Res.">
        <title>The secreted protein discovery initiative (SPDI), a large-scale effort to identify novel human secreted and transmembrane proteins: a bioinformatics assessment.</title>
        <authorList>
            <person name="Clark H.F."/>
            <person name="Gurney A.L."/>
            <person name="Abaya E."/>
            <person name="Baker K."/>
            <person name="Baldwin D.T."/>
            <person name="Brush J."/>
            <person name="Chen J."/>
            <person name="Chow B."/>
            <person name="Chui C."/>
            <person name="Crowley C."/>
            <person name="Currell B."/>
            <person name="Deuel B."/>
            <person name="Dowd P."/>
            <person name="Eaton D."/>
            <person name="Foster J.S."/>
            <person name="Grimaldi C."/>
            <person name="Gu Q."/>
            <person name="Hass P.E."/>
            <person name="Heldens S."/>
            <person name="Huang A."/>
            <person name="Kim H.S."/>
            <person name="Klimowski L."/>
            <person name="Jin Y."/>
            <person name="Johnson S."/>
            <person name="Lee J."/>
            <person name="Lewis L."/>
            <person name="Liao D."/>
            <person name="Mark M.R."/>
            <person name="Robbie E."/>
            <person name="Sanchez C."/>
            <person name="Schoenfeld J."/>
            <person name="Seshagiri S."/>
            <person name="Simmons L."/>
            <person name="Singh J."/>
            <person name="Smith V."/>
            <person name="Stinson J."/>
            <person name="Vagts A."/>
            <person name="Vandlen R.L."/>
            <person name="Watanabe C."/>
            <person name="Wieand D."/>
            <person name="Woods K."/>
            <person name="Xie M.-H."/>
            <person name="Yansura D.G."/>
            <person name="Yi S."/>
            <person name="Yu G."/>
            <person name="Yuan J."/>
            <person name="Zhang M."/>
            <person name="Zhang Z."/>
            <person name="Goddard A.D."/>
            <person name="Wood W.I."/>
            <person name="Godowski P.J."/>
            <person name="Gray A.M."/>
        </authorList>
    </citation>
    <scope>NUCLEOTIDE SEQUENCE [LARGE SCALE MRNA] (ISOFORM 1)</scope>
    <scope>VARIANT GLU-203</scope>
</reference>
<reference key="2">
    <citation type="journal article" date="2004" name="Nat. Genet.">
        <title>Complete sequencing and characterization of 21,243 full-length human cDNAs.</title>
        <authorList>
            <person name="Ota T."/>
            <person name="Suzuki Y."/>
            <person name="Nishikawa T."/>
            <person name="Otsuki T."/>
            <person name="Sugiyama T."/>
            <person name="Irie R."/>
            <person name="Wakamatsu A."/>
            <person name="Hayashi K."/>
            <person name="Sato H."/>
            <person name="Nagai K."/>
            <person name="Kimura K."/>
            <person name="Makita H."/>
            <person name="Sekine M."/>
            <person name="Obayashi M."/>
            <person name="Nishi T."/>
            <person name="Shibahara T."/>
            <person name="Tanaka T."/>
            <person name="Ishii S."/>
            <person name="Yamamoto J."/>
            <person name="Saito K."/>
            <person name="Kawai Y."/>
            <person name="Isono Y."/>
            <person name="Nakamura Y."/>
            <person name="Nagahari K."/>
            <person name="Murakami K."/>
            <person name="Yasuda T."/>
            <person name="Iwayanagi T."/>
            <person name="Wagatsuma M."/>
            <person name="Shiratori A."/>
            <person name="Sudo H."/>
            <person name="Hosoiri T."/>
            <person name="Kaku Y."/>
            <person name="Kodaira H."/>
            <person name="Kondo H."/>
            <person name="Sugawara M."/>
            <person name="Takahashi M."/>
            <person name="Kanda K."/>
            <person name="Yokoi T."/>
            <person name="Furuya T."/>
            <person name="Kikkawa E."/>
            <person name="Omura Y."/>
            <person name="Abe K."/>
            <person name="Kamihara K."/>
            <person name="Katsuta N."/>
            <person name="Sato K."/>
            <person name="Tanikawa M."/>
            <person name="Yamazaki M."/>
            <person name="Ninomiya K."/>
            <person name="Ishibashi T."/>
            <person name="Yamashita H."/>
            <person name="Murakawa K."/>
            <person name="Fujimori K."/>
            <person name="Tanai H."/>
            <person name="Kimata M."/>
            <person name="Watanabe M."/>
            <person name="Hiraoka S."/>
            <person name="Chiba Y."/>
            <person name="Ishida S."/>
            <person name="Ono Y."/>
            <person name="Takiguchi S."/>
            <person name="Watanabe S."/>
            <person name="Yosida M."/>
            <person name="Hotuta T."/>
            <person name="Kusano J."/>
            <person name="Kanehori K."/>
            <person name="Takahashi-Fujii A."/>
            <person name="Hara H."/>
            <person name="Tanase T.-O."/>
            <person name="Nomura Y."/>
            <person name="Togiya S."/>
            <person name="Komai F."/>
            <person name="Hara R."/>
            <person name="Takeuchi K."/>
            <person name="Arita M."/>
            <person name="Imose N."/>
            <person name="Musashino K."/>
            <person name="Yuuki H."/>
            <person name="Oshima A."/>
            <person name="Sasaki N."/>
            <person name="Aotsuka S."/>
            <person name="Yoshikawa Y."/>
            <person name="Matsunawa H."/>
            <person name="Ichihara T."/>
            <person name="Shiohata N."/>
            <person name="Sano S."/>
            <person name="Moriya S."/>
            <person name="Momiyama H."/>
            <person name="Satoh N."/>
            <person name="Takami S."/>
            <person name="Terashima Y."/>
            <person name="Suzuki O."/>
            <person name="Nakagawa S."/>
            <person name="Senoh A."/>
            <person name="Mizoguchi H."/>
            <person name="Goto Y."/>
            <person name="Shimizu F."/>
            <person name="Wakebe H."/>
            <person name="Hishigaki H."/>
            <person name="Watanabe T."/>
            <person name="Sugiyama A."/>
            <person name="Takemoto M."/>
            <person name="Kawakami B."/>
            <person name="Yamazaki M."/>
            <person name="Watanabe K."/>
            <person name="Kumagai A."/>
            <person name="Itakura S."/>
            <person name="Fukuzumi Y."/>
            <person name="Fujimori Y."/>
            <person name="Komiyama M."/>
            <person name="Tashiro H."/>
            <person name="Tanigami A."/>
            <person name="Fujiwara T."/>
            <person name="Ono T."/>
            <person name="Yamada K."/>
            <person name="Fujii Y."/>
            <person name="Ozaki K."/>
            <person name="Hirao M."/>
            <person name="Ohmori Y."/>
            <person name="Kawabata A."/>
            <person name="Hikiji T."/>
            <person name="Kobatake N."/>
            <person name="Inagaki H."/>
            <person name="Ikema Y."/>
            <person name="Okamoto S."/>
            <person name="Okitani R."/>
            <person name="Kawakami T."/>
            <person name="Noguchi S."/>
            <person name="Itoh T."/>
            <person name="Shigeta K."/>
            <person name="Senba T."/>
            <person name="Matsumura K."/>
            <person name="Nakajima Y."/>
            <person name="Mizuno T."/>
            <person name="Morinaga M."/>
            <person name="Sasaki M."/>
            <person name="Togashi T."/>
            <person name="Oyama M."/>
            <person name="Hata H."/>
            <person name="Watanabe M."/>
            <person name="Komatsu T."/>
            <person name="Mizushima-Sugano J."/>
            <person name="Satoh T."/>
            <person name="Shirai Y."/>
            <person name="Takahashi Y."/>
            <person name="Nakagawa K."/>
            <person name="Okumura K."/>
            <person name="Nagase T."/>
            <person name="Nomura N."/>
            <person name="Kikuchi H."/>
            <person name="Masuho Y."/>
            <person name="Yamashita R."/>
            <person name="Nakai K."/>
            <person name="Yada T."/>
            <person name="Nakamura Y."/>
            <person name="Ohara O."/>
            <person name="Isogai T."/>
            <person name="Sugano S."/>
        </authorList>
    </citation>
    <scope>NUCLEOTIDE SEQUENCE [LARGE SCALE MRNA] (ISOFORM 2)</scope>
    <source>
        <tissue>Peripheral blood monocyte</tissue>
        <tissue>Placenta</tissue>
    </source>
</reference>
<reference key="3">
    <citation type="journal article" date="2004" name="Nature">
        <title>DNA sequence and analysis of human chromosome 9.</title>
        <authorList>
            <person name="Humphray S.J."/>
            <person name="Oliver K."/>
            <person name="Hunt A.R."/>
            <person name="Plumb R.W."/>
            <person name="Loveland J.E."/>
            <person name="Howe K.L."/>
            <person name="Andrews T.D."/>
            <person name="Searle S."/>
            <person name="Hunt S.E."/>
            <person name="Scott C.E."/>
            <person name="Jones M.C."/>
            <person name="Ainscough R."/>
            <person name="Almeida J.P."/>
            <person name="Ambrose K.D."/>
            <person name="Ashwell R.I.S."/>
            <person name="Babbage A.K."/>
            <person name="Babbage S."/>
            <person name="Bagguley C.L."/>
            <person name="Bailey J."/>
            <person name="Banerjee R."/>
            <person name="Barker D.J."/>
            <person name="Barlow K.F."/>
            <person name="Bates K."/>
            <person name="Beasley H."/>
            <person name="Beasley O."/>
            <person name="Bird C.P."/>
            <person name="Bray-Allen S."/>
            <person name="Brown A.J."/>
            <person name="Brown J.Y."/>
            <person name="Burford D."/>
            <person name="Burrill W."/>
            <person name="Burton J."/>
            <person name="Carder C."/>
            <person name="Carter N.P."/>
            <person name="Chapman J.C."/>
            <person name="Chen Y."/>
            <person name="Clarke G."/>
            <person name="Clark S.Y."/>
            <person name="Clee C.M."/>
            <person name="Clegg S."/>
            <person name="Collier R.E."/>
            <person name="Corby N."/>
            <person name="Crosier M."/>
            <person name="Cummings A.T."/>
            <person name="Davies J."/>
            <person name="Dhami P."/>
            <person name="Dunn M."/>
            <person name="Dutta I."/>
            <person name="Dyer L.W."/>
            <person name="Earthrowl M.E."/>
            <person name="Faulkner L."/>
            <person name="Fleming C.J."/>
            <person name="Frankish A."/>
            <person name="Frankland J.A."/>
            <person name="French L."/>
            <person name="Fricker D.G."/>
            <person name="Garner P."/>
            <person name="Garnett J."/>
            <person name="Ghori J."/>
            <person name="Gilbert J.G.R."/>
            <person name="Glison C."/>
            <person name="Grafham D.V."/>
            <person name="Gribble S."/>
            <person name="Griffiths C."/>
            <person name="Griffiths-Jones S."/>
            <person name="Grocock R."/>
            <person name="Guy J."/>
            <person name="Hall R.E."/>
            <person name="Hammond S."/>
            <person name="Harley J.L."/>
            <person name="Harrison E.S.I."/>
            <person name="Hart E.A."/>
            <person name="Heath P.D."/>
            <person name="Henderson C.D."/>
            <person name="Hopkins B.L."/>
            <person name="Howard P.J."/>
            <person name="Howden P.J."/>
            <person name="Huckle E."/>
            <person name="Johnson C."/>
            <person name="Johnson D."/>
            <person name="Joy A.A."/>
            <person name="Kay M."/>
            <person name="Keenan S."/>
            <person name="Kershaw J.K."/>
            <person name="Kimberley A.M."/>
            <person name="King A."/>
            <person name="Knights A."/>
            <person name="Laird G.K."/>
            <person name="Langford C."/>
            <person name="Lawlor S."/>
            <person name="Leongamornlert D.A."/>
            <person name="Leversha M."/>
            <person name="Lloyd C."/>
            <person name="Lloyd D.M."/>
            <person name="Lovell J."/>
            <person name="Martin S."/>
            <person name="Mashreghi-Mohammadi M."/>
            <person name="Matthews L."/>
            <person name="McLaren S."/>
            <person name="McLay K.E."/>
            <person name="McMurray A."/>
            <person name="Milne S."/>
            <person name="Nickerson T."/>
            <person name="Nisbett J."/>
            <person name="Nordsiek G."/>
            <person name="Pearce A.V."/>
            <person name="Peck A.I."/>
            <person name="Porter K.M."/>
            <person name="Pandian R."/>
            <person name="Pelan S."/>
            <person name="Phillimore B."/>
            <person name="Povey S."/>
            <person name="Ramsey Y."/>
            <person name="Rand V."/>
            <person name="Scharfe M."/>
            <person name="Sehra H.K."/>
            <person name="Shownkeen R."/>
            <person name="Sims S.K."/>
            <person name="Skuce C.D."/>
            <person name="Smith M."/>
            <person name="Steward C.A."/>
            <person name="Swarbreck D."/>
            <person name="Sycamore N."/>
            <person name="Tester J."/>
            <person name="Thorpe A."/>
            <person name="Tracey A."/>
            <person name="Tromans A."/>
            <person name="Thomas D.W."/>
            <person name="Wall M."/>
            <person name="Wallis J.M."/>
            <person name="West A.P."/>
            <person name="Whitehead S.L."/>
            <person name="Willey D.L."/>
            <person name="Williams S.A."/>
            <person name="Wilming L."/>
            <person name="Wray P.W."/>
            <person name="Young L."/>
            <person name="Ashurst J.L."/>
            <person name="Coulson A."/>
            <person name="Blocker H."/>
            <person name="Durbin R.M."/>
            <person name="Sulston J.E."/>
            <person name="Hubbard T."/>
            <person name="Jackson M.J."/>
            <person name="Bentley D.R."/>
            <person name="Beck S."/>
            <person name="Rogers J."/>
            <person name="Dunham I."/>
        </authorList>
    </citation>
    <scope>NUCLEOTIDE SEQUENCE [LARGE SCALE GENOMIC DNA]</scope>
</reference>
<reference key="4">
    <citation type="journal article" date="2004" name="Genome Res.">
        <title>The status, quality, and expansion of the NIH full-length cDNA project: the Mammalian Gene Collection (MGC).</title>
        <authorList>
            <consortium name="The MGC Project Team"/>
        </authorList>
    </citation>
    <scope>NUCLEOTIDE SEQUENCE [LARGE SCALE MRNA] (ISOFORM 3)</scope>
    <source>
        <tissue>B-cell</tissue>
    </source>
</reference>
<reference key="5">
    <citation type="journal article" date="2003" name="Nat. Med.">
        <title>Salusins: newly identified bioactive peptides with hemodynamic and mitogenic activities.</title>
        <authorList>
            <person name="Shichiri M."/>
            <person name="Ishimaru S."/>
            <person name="Ota T."/>
            <person name="Nishikawa T."/>
            <person name="Isogai T."/>
            <person name="Hirata Y."/>
        </authorList>
    </citation>
    <scope>TISSUE SPECIFICITY</scope>
</reference>
<organism>
    <name type="scientific">Homo sapiens</name>
    <name type="common">Human</name>
    <dbReference type="NCBI Taxonomy" id="9606"/>
    <lineage>
        <taxon>Eukaryota</taxon>
        <taxon>Metazoa</taxon>
        <taxon>Chordata</taxon>
        <taxon>Craniata</taxon>
        <taxon>Vertebrata</taxon>
        <taxon>Euteleostomi</taxon>
        <taxon>Mammalia</taxon>
        <taxon>Eutheria</taxon>
        <taxon>Euarchontoglires</taxon>
        <taxon>Primates</taxon>
        <taxon>Haplorrhini</taxon>
        <taxon>Catarrhini</taxon>
        <taxon>Hominidae</taxon>
        <taxon>Homo</taxon>
    </lineage>
</organism>
<keyword id="KW-0025">Alternative splicing</keyword>
<keyword id="KW-0067">ATP-binding</keyword>
<keyword id="KW-0256">Endoplasmic reticulum</keyword>
<keyword id="KW-0325">Glycoprotein</keyword>
<keyword id="KW-0547">Nucleotide-binding</keyword>
<keyword id="KW-1267">Proteomics identification</keyword>
<keyword id="KW-1185">Reference proteome</keyword>
<keyword id="KW-0732">Signal</keyword>
<gene>
    <name type="primary">TOR2A</name>
    <name type="synonym">TORP1</name>
    <name type="ORF">UNQ6408/PRO21181</name>
</gene>
<name>TOR2A_HUMAN</name>